<proteinExistence type="inferred from homology"/>
<reference key="1">
    <citation type="journal article" date="2008" name="BMC Genomics">
        <title>The genome of Aeromonas salmonicida subsp. salmonicida A449: insights into the evolution of a fish pathogen.</title>
        <authorList>
            <person name="Reith M.E."/>
            <person name="Singh R.K."/>
            <person name="Curtis B."/>
            <person name="Boyd J.M."/>
            <person name="Bouevitch A."/>
            <person name="Kimball J."/>
            <person name="Munholland J."/>
            <person name="Murphy C."/>
            <person name="Sarty D."/>
            <person name="Williams J."/>
            <person name="Nash J.H."/>
            <person name="Johnson S.C."/>
            <person name="Brown L.L."/>
        </authorList>
    </citation>
    <scope>NUCLEOTIDE SEQUENCE [LARGE SCALE GENOMIC DNA]</scope>
    <source>
        <strain>A449</strain>
    </source>
</reference>
<dbReference type="EC" id="7.4.2.8" evidence="1"/>
<dbReference type="EMBL" id="CP000644">
    <property type="protein sequence ID" value="ABO88585.1"/>
    <property type="molecule type" value="Genomic_DNA"/>
</dbReference>
<dbReference type="RefSeq" id="WP_005314170.1">
    <property type="nucleotide sequence ID" value="NC_009348.1"/>
</dbReference>
<dbReference type="SMR" id="A4SI63"/>
<dbReference type="STRING" id="29491.GCA_000820065_04402"/>
<dbReference type="KEGG" id="asa:ASA_0405"/>
<dbReference type="PATRIC" id="fig|382245.13.peg.411"/>
<dbReference type="eggNOG" id="COG0653">
    <property type="taxonomic scope" value="Bacteria"/>
</dbReference>
<dbReference type="HOGENOM" id="CLU_005314_3_0_6"/>
<dbReference type="Proteomes" id="UP000000225">
    <property type="component" value="Chromosome"/>
</dbReference>
<dbReference type="GO" id="GO:0031522">
    <property type="term" value="C:cell envelope Sec protein transport complex"/>
    <property type="evidence" value="ECO:0007669"/>
    <property type="project" value="TreeGrafter"/>
</dbReference>
<dbReference type="GO" id="GO:0005829">
    <property type="term" value="C:cytosol"/>
    <property type="evidence" value="ECO:0007669"/>
    <property type="project" value="TreeGrafter"/>
</dbReference>
<dbReference type="GO" id="GO:0005886">
    <property type="term" value="C:plasma membrane"/>
    <property type="evidence" value="ECO:0007669"/>
    <property type="project" value="UniProtKB-SubCell"/>
</dbReference>
<dbReference type="GO" id="GO:0005524">
    <property type="term" value="F:ATP binding"/>
    <property type="evidence" value="ECO:0007669"/>
    <property type="project" value="UniProtKB-UniRule"/>
</dbReference>
<dbReference type="GO" id="GO:0046872">
    <property type="term" value="F:metal ion binding"/>
    <property type="evidence" value="ECO:0007669"/>
    <property type="project" value="UniProtKB-KW"/>
</dbReference>
<dbReference type="GO" id="GO:0008564">
    <property type="term" value="F:protein-exporting ATPase activity"/>
    <property type="evidence" value="ECO:0007669"/>
    <property type="project" value="UniProtKB-EC"/>
</dbReference>
<dbReference type="GO" id="GO:0065002">
    <property type="term" value="P:intracellular protein transmembrane transport"/>
    <property type="evidence" value="ECO:0007669"/>
    <property type="project" value="UniProtKB-UniRule"/>
</dbReference>
<dbReference type="GO" id="GO:0017038">
    <property type="term" value="P:protein import"/>
    <property type="evidence" value="ECO:0007669"/>
    <property type="project" value="InterPro"/>
</dbReference>
<dbReference type="GO" id="GO:0006605">
    <property type="term" value="P:protein targeting"/>
    <property type="evidence" value="ECO:0007669"/>
    <property type="project" value="UniProtKB-UniRule"/>
</dbReference>
<dbReference type="GO" id="GO:0043952">
    <property type="term" value="P:protein transport by the Sec complex"/>
    <property type="evidence" value="ECO:0007669"/>
    <property type="project" value="TreeGrafter"/>
</dbReference>
<dbReference type="CDD" id="cd17928">
    <property type="entry name" value="DEXDc_SecA"/>
    <property type="match status" value="1"/>
</dbReference>
<dbReference type="CDD" id="cd18803">
    <property type="entry name" value="SF2_C_secA"/>
    <property type="match status" value="1"/>
</dbReference>
<dbReference type="FunFam" id="1.10.3060.10:FF:000001">
    <property type="entry name" value="Preprotein translocase subunit SecA"/>
    <property type="match status" value="1"/>
</dbReference>
<dbReference type="FunFam" id="3.40.50.300:FF:000081">
    <property type="entry name" value="Preprotein translocase subunit SecA"/>
    <property type="match status" value="1"/>
</dbReference>
<dbReference type="FunFam" id="3.40.50.300:FF:000113">
    <property type="entry name" value="Preprotein translocase subunit SecA"/>
    <property type="match status" value="1"/>
</dbReference>
<dbReference type="FunFam" id="3.90.1440.10:FF:000001">
    <property type="entry name" value="Preprotein translocase subunit SecA"/>
    <property type="match status" value="1"/>
</dbReference>
<dbReference type="Gene3D" id="1.10.3060.10">
    <property type="entry name" value="Helical scaffold and wing domains of SecA"/>
    <property type="match status" value="1"/>
</dbReference>
<dbReference type="Gene3D" id="3.40.50.300">
    <property type="entry name" value="P-loop containing nucleotide triphosphate hydrolases"/>
    <property type="match status" value="2"/>
</dbReference>
<dbReference type="Gene3D" id="3.90.1440.10">
    <property type="entry name" value="SecA, preprotein cross-linking domain"/>
    <property type="match status" value="1"/>
</dbReference>
<dbReference type="HAMAP" id="MF_01382">
    <property type="entry name" value="SecA"/>
    <property type="match status" value="1"/>
</dbReference>
<dbReference type="InterPro" id="IPR014001">
    <property type="entry name" value="Helicase_ATP-bd"/>
</dbReference>
<dbReference type="InterPro" id="IPR027417">
    <property type="entry name" value="P-loop_NTPase"/>
</dbReference>
<dbReference type="InterPro" id="IPR004027">
    <property type="entry name" value="SEC_C_motif"/>
</dbReference>
<dbReference type="InterPro" id="IPR000185">
    <property type="entry name" value="SecA"/>
</dbReference>
<dbReference type="InterPro" id="IPR020937">
    <property type="entry name" value="SecA_CS"/>
</dbReference>
<dbReference type="InterPro" id="IPR011115">
    <property type="entry name" value="SecA_DEAD"/>
</dbReference>
<dbReference type="InterPro" id="IPR014018">
    <property type="entry name" value="SecA_motor_DEAD"/>
</dbReference>
<dbReference type="InterPro" id="IPR011130">
    <property type="entry name" value="SecA_preprotein_X-link_dom"/>
</dbReference>
<dbReference type="InterPro" id="IPR044722">
    <property type="entry name" value="SecA_SF2_C"/>
</dbReference>
<dbReference type="InterPro" id="IPR011116">
    <property type="entry name" value="SecA_Wing/Scaffold"/>
</dbReference>
<dbReference type="InterPro" id="IPR036266">
    <property type="entry name" value="SecA_Wing/Scaffold_sf"/>
</dbReference>
<dbReference type="InterPro" id="IPR036670">
    <property type="entry name" value="SecA_X-link_sf"/>
</dbReference>
<dbReference type="NCBIfam" id="NF009538">
    <property type="entry name" value="PRK12904.1"/>
    <property type="match status" value="1"/>
</dbReference>
<dbReference type="NCBIfam" id="TIGR00963">
    <property type="entry name" value="secA"/>
    <property type="match status" value="1"/>
</dbReference>
<dbReference type="PANTHER" id="PTHR30612:SF0">
    <property type="entry name" value="CHLOROPLAST PROTEIN-TRANSPORTING ATPASE"/>
    <property type="match status" value="1"/>
</dbReference>
<dbReference type="PANTHER" id="PTHR30612">
    <property type="entry name" value="SECA INNER MEMBRANE COMPONENT OF SEC PROTEIN SECRETION SYSTEM"/>
    <property type="match status" value="1"/>
</dbReference>
<dbReference type="Pfam" id="PF21090">
    <property type="entry name" value="P-loop_SecA"/>
    <property type="match status" value="1"/>
</dbReference>
<dbReference type="Pfam" id="PF02810">
    <property type="entry name" value="SEC-C"/>
    <property type="match status" value="1"/>
</dbReference>
<dbReference type="Pfam" id="PF07517">
    <property type="entry name" value="SecA_DEAD"/>
    <property type="match status" value="1"/>
</dbReference>
<dbReference type="Pfam" id="PF01043">
    <property type="entry name" value="SecA_PP_bind"/>
    <property type="match status" value="1"/>
</dbReference>
<dbReference type="Pfam" id="PF07516">
    <property type="entry name" value="SecA_SW"/>
    <property type="match status" value="1"/>
</dbReference>
<dbReference type="PRINTS" id="PR00906">
    <property type="entry name" value="SECA"/>
</dbReference>
<dbReference type="SMART" id="SM00957">
    <property type="entry name" value="SecA_DEAD"/>
    <property type="match status" value="1"/>
</dbReference>
<dbReference type="SMART" id="SM00958">
    <property type="entry name" value="SecA_PP_bind"/>
    <property type="match status" value="1"/>
</dbReference>
<dbReference type="SUPFAM" id="SSF81886">
    <property type="entry name" value="Helical scaffold and wing domains of SecA"/>
    <property type="match status" value="1"/>
</dbReference>
<dbReference type="SUPFAM" id="SSF52540">
    <property type="entry name" value="P-loop containing nucleoside triphosphate hydrolases"/>
    <property type="match status" value="2"/>
</dbReference>
<dbReference type="SUPFAM" id="SSF81767">
    <property type="entry name" value="Pre-protein crosslinking domain of SecA"/>
    <property type="match status" value="1"/>
</dbReference>
<dbReference type="PROSITE" id="PS01312">
    <property type="entry name" value="SECA"/>
    <property type="match status" value="1"/>
</dbReference>
<dbReference type="PROSITE" id="PS51196">
    <property type="entry name" value="SECA_MOTOR_DEAD"/>
    <property type="match status" value="1"/>
</dbReference>
<name>SECA_AERS4</name>
<organism>
    <name type="scientific">Aeromonas salmonicida (strain A449)</name>
    <dbReference type="NCBI Taxonomy" id="382245"/>
    <lineage>
        <taxon>Bacteria</taxon>
        <taxon>Pseudomonadati</taxon>
        <taxon>Pseudomonadota</taxon>
        <taxon>Gammaproteobacteria</taxon>
        <taxon>Aeromonadales</taxon>
        <taxon>Aeromonadaceae</taxon>
        <taxon>Aeromonas</taxon>
    </lineage>
</organism>
<feature type="chain" id="PRO_0000320716" description="Protein translocase subunit SecA">
    <location>
        <begin position="1"/>
        <end position="906"/>
    </location>
</feature>
<feature type="region of interest" description="Disordered" evidence="2">
    <location>
        <begin position="839"/>
        <end position="896"/>
    </location>
</feature>
<feature type="compositionally biased region" description="Basic and acidic residues" evidence="2">
    <location>
        <begin position="871"/>
        <end position="886"/>
    </location>
</feature>
<feature type="binding site" evidence="1">
    <location>
        <position position="87"/>
    </location>
    <ligand>
        <name>ATP</name>
        <dbReference type="ChEBI" id="CHEBI:30616"/>
    </ligand>
</feature>
<feature type="binding site" evidence="1">
    <location>
        <begin position="105"/>
        <end position="109"/>
    </location>
    <ligand>
        <name>ATP</name>
        <dbReference type="ChEBI" id="CHEBI:30616"/>
    </ligand>
</feature>
<feature type="binding site" evidence="1">
    <location>
        <position position="512"/>
    </location>
    <ligand>
        <name>ATP</name>
        <dbReference type="ChEBI" id="CHEBI:30616"/>
    </ligand>
</feature>
<feature type="binding site" evidence="1">
    <location>
        <position position="890"/>
    </location>
    <ligand>
        <name>Zn(2+)</name>
        <dbReference type="ChEBI" id="CHEBI:29105"/>
    </ligand>
</feature>
<feature type="binding site" evidence="1">
    <location>
        <position position="892"/>
    </location>
    <ligand>
        <name>Zn(2+)</name>
        <dbReference type="ChEBI" id="CHEBI:29105"/>
    </ligand>
</feature>
<feature type="binding site" evidence="1">
    <location>
        <position position="901"/>
    </location>
    <ligand>
        <name>Zn(2+)</name>
        <dbReference type="ChEBI" id="CHEBI:29105"/>
    </ligand>
</feature>
<feature type="binding site" evidence="1">
    <location>
        <position position="902"/>
    </location>
    <ligand>
        <name>Zn(2+)</name>
        <dbReference type="ChEBI" id="CHEBI:29105"/>
    </ligand>
</feature>
<protein>
    <recommendedName>
        <fullName evidence="1">Protein translocase subunit SecA</fullName>
        <ecNumber evidence="1">7.4.2.8</ecNumber>
    </recommendedName>
</protein>
<gene>
    <name evidence="1" type="primary">secA</name>
    <name type="ordered locus">ASA_0405</name>
</gene>
<evidence type="ECO:0000255" key="1">
    <source>
        <dbReference type="HAMAP-Rule" id="MF_01382"/>
    </source>
</evidence>
<evidence type="ECO:0000256" key="2">
    <source>
        <dbReference type="SAM" id="MobiDB-lite"/>
    </source>
</evidence>
<comment type="function">
    <text evidence="1">Part of the Sec protein translocase complex. Interacts with the SecYEG preprotein conducting channel. Has a central role in coupling the hydrolysis of ATP to the transfer of proteins into and across the cell membrane, serving both as a receptor for the preprotein-SecB complex and as an ATP-driven molecular motor driving the stepwise translocation of polypeptide chains across the membrane.</text>
</comment>
<comment type="catalytic activity">
    <reaction evidence="1">
        <text>ATP + H2O + cellular proteinSide 1 = ADP + phosphate + cellular proteinSide 2.</text>
        <dbReference type="EC" id="7.4.2.8"/>
    </reaction>
</comment>
<comment type="cofactor">
    <cofactor evidence="1">
        <name>Zn(2+)</name>
        <dbReference type="ChEBI" id="CHEBI:29105"/>
    </cofactor>
    <text evidence="1">May bind 1 zinc ion per subunit.</text>
</comment>
<comment type="subunit">
    <text evidence="1">Monomer and homodimer. Part of the essential Sec protein translocation apparatus which comprises SecA, SecYEG and auxiliary proteins SecDF-YajC and YidC.</text>
</comment>
<comment type="subcellular location">
    <subcellularLocation>
        <location evidence="1">Cell inner membrane</location>
        <topology evidence="1">Peripheral membrane protein</topology>
        <orientation evidence="1">Cytoplasmic side</orientation>
    </subcellularLocation>
    <subcellularLocation>
        <location evidence="1">Cytoplasm</location>
    </subcellularLocation>
    <text evidence="1">Distribution is 50-50.</text>
</comment>
<comment type="similarity">
    <text evidence="1">Belongs to the SecA family.</text>
</comment>
<accession>A4SI63</accession>
<keyword id="KW-0067">ATP-binding</keyword>
<keyword id="KW-0997">Cell inner membrane</keyword>
<keyword id="KW-1003">Cell membrane</keyword>
<keyword id="KW-0963">Cytoplasm</keyword>
<keyword id="KW-0472">Membrane</keyword>
<keyword id="KW-0479">Metal-binding</keyword>
<keyword id="KW-0547">Nucleotide-binding</keyword>
<keyword id="KW-0653">Protein transport</keyword>
<keyword id="KW-1278">Translocase</keyword>
<keyword id="KW-0811">Translocation</keyword>
<keyword id="KW-0813">Transport</keyword>
<keyword id="KW-0862">Zinc</keyword>
<sequence>MISTLLTKIIGSRNDRTLKALRKIVKQINAMEPQFEALSDSELQAKTAEYRQRLEQGETLDQLLPEAFATVREASKRVFGMRHFDVQLIGSMVLDSNRIAEMKTGEGKTLTATLPAYLNALSGRGVHVVTVNDYLAKRDAEANRPLFTFLGMTVDCNVPGMDASQKRDAYAADITYGTNNEFGFDYLRDNMAFSPEQRVQRPLNYALVDEVDSVLIDEARTPLIISGPAEDSSALYIQVNKLIPQLIKQDKEDTEEYTGEGHYTVDEKNRQALLTENGQIFVEELLKREDLLAEEDSLFSATNISLLHHVNAGLRAHTLFERNVDYIVQKDEIVIVDEHTGRTMPGRRWSDGLHQAVEAKEGVKIQNENQTLASITFQNYFRLYDKLAGMTGTADTEAFEFQQIYGLDTVVIPTNKPMVRKDMGDLVYLTAQEKYAAIVEDIRGCVSRGQPVLVGTVSIENSELLSGILTKENIPHKVLNAKFHAMEAEIVAQAGQLGAVTIATNMAGRGTDIVLGGNWQAEIAQLDNPTDEQIAELKAAWQVRHDEVLAAGGLHIIGTERHESRRIDNQLRGRSGRQGDPGSSRFYLSMEDTLMRIFASDRVTGMMKKLGMEEGEAIEHPWVTKAIENAQRKVEGRNFDIRKSLLEFDDVANDQRKVVYEQRNELLDTNDISETIHVIRDDVYGAVIDEYIPPQSLEEMWDVPGLEARLKADFGLDLPLQQWLAEDDKLYEEKLRERILDEATKLYAHKQELVGVEVLRNFEKAVMLQTLDGLWKEHLAAMDHLRQGIHLRGYAQKNPKQEYKRESFDLFTQMLETLKRDVVSILSRVQVQERDVEALEEQQRQQSEAAPRTYTHATAESQLADEEAAGEEGHTTFVRDEQKIGRNDPCPCGSGKKYKHCHGQLT</sequence>